<dbReference type="EC" id="2.7.4.22" evidence="1"/>
<dbReference type="EMBL" id="AP008232">
    <property type="protein sequence ID" value="BAE75216.1"/>
    <property type="molecule type" value="Genomic_DNA"/>
</dbReference>
<dbReference type="RefSeq" id="WP_011411672.1">
    <property type="nucleotide sequence ID" value="NC_007712.1"/>
</dbReference>
<dbReference type="SMR" id="Q2NRK9"/>
<dbReference type="STRING" id="343509.SG1941"/>
<dbReference type="KEGG" id="sgl:SG1941"/>
<dbReference type="eggNOG" id="COG0528">
    <property type="taxonomic scope" value="Bacteria"/>
</dbReference>
<dbReference type="HOGENOM" id="CLU_033861_0_0_6"/>
<dbReference type="OrthoDB" id="9807458at2"/>
<dbReference type="BioCyc" id="SGLO343509:SGP1_RS17830-MONOMER"/>
<dbReference type="UniPathway" id="UPA00159">
    <property type="reaction ID" value="UER00275"/>
</dbReference>
<dbReference type="Proteomes" id="UP000001932">
    <property type="component" value="Chromosome"/>
</dbReference>
<dbReference type="GO" id="GO:0005829">
    <property type="term" value="C:cytosol"/>
    <property type="evidence" value="ECO:0007669"/>
    <property type="project" value="TreeGrafter"/>
</dbReference>
<dbReference type="GO" id="GO:0005524">
    <property type="term" value="F:ATP binding"/>
    <property type="evidence" value="ECO:0007669"/>
    <property type="project" value="UniProtKB-KW"/>
</dbReference>
<dbReference type="GO" id="GO:0033862">
    <property type="term" value="F:UMP kinase activity"/>
    <property type="evidence" value="ECO:0007669"/>
    <property type="project" value="UniProtKB-EC"/>
</dbReference>
<dbReference type="GO" id="GO:0044210">
    <property type="term" value="P:'de novo' CTP biosynthetic process"/>
    <property type="evidence" value="ECO:0007669"/>
    <property type="project" value="UniProtKB-UniRule"/>
</dbReference>
<dbReference type="GO" id="GO:0006225">
    <property type="term" value="P:UDP biosynthetic process"/>
    <property type="evidence" value="ECO:0007669"/>
    <property type="project" value="TreeGrafter"/>
</dbReference>
<dbReference type="CDD" id="cd04254">
    <property type="entry name" value="AAK_UMPK-PyrH-Ec"/>
    <property type="match status" value="1"/>
</dbReference>
<dbReference type="FunFam" id="3.40.1160.10:FF:000001">
    <property type="entry name" value="Uridylate kinase"/>
    <property type="match status" value="1"/>
</dbReference>
<dbReference type="Gene3D" id="3.40.1160.10">
    <property type="entry name" value="Acetylglutamate kinase-like"/>
    <property type="match status" value="1"/>
</dbReference>
<dbReference type="HAMAP" id="MF_01220_B">
    <property type="entry name" value="PyrH_B"/>
    <property type="match status" value="1"/>
</dbReference>
<dbReference type="InterPro" id="IPR036393">
    <property type="entry name" value="AceGlu_kinase-like_sf"/>
</dbReference>
<dbReference type="InterPro" id="IPR001048">
    <property type="entry name" value="Asp/Glu/Uridylate_kinase"/>
</dbReference>
<dbReference type="InterPro" id="IPR011817">
    <property type="entry name" value="Uridylate_kinase"/>
</dbReference>
<dbReference type="InterPro" id="IPR015963">
    <property type="entry name" value="Uridylate_kinase_bac"/>
</dbReference>
<dbReference type="NCBIfam" id="TIGR02075">
    <property type="entry name" value="pyrH_bact"/>
    <property type="match status" value="1"/>
</dbReference>
<dbReference type="PANTHER" id="PTHR42833">
    <property type="entry name" value="URIDYLATE KINASE"/>
    <property type="match status" value="1"/>
</dbReference>
<dbReference type="PANTHER" id="PTHR42833:SF4">
    <property type="entry name" value="URIDYLATE KINASE PUMPKIN, CHLOROPLASTIC"/>
    <property type="match status" value="1"/>
</dbReference>
<dbReference type="Pfam" id="PF00696">
    <property type="entry name" value="AA_kinase"/>
    <property type="match status" value="1"/>
</dbReference>
<dbReference type="PIRSF" id="PIRSF005650">
    <property type="entry name" value="Uridylate_kin"/>
    <property type="match status" value="1"/>
</dbReference>
<dbReference type="SUPFAM" id="SSF53633">
    <property type="entry name" value="Carbamate kinase-like"/>
    <property type="match status" value="1"/>
</dbReference>
<protein>
    <recommendedName>
        <fullName evidence="1">Uridylate kinase</fullName>
        <shortName evidence="1">UK</shortName>
        <ecNumber evidence="1">2.7.4.22</ecNumber>
    </recommendedName>
    <alternativeName>
        <fullName evidence="1">Uridine monophosphate kinase</fullName>
        <shortName evidence="1">UMP kinase</shortName>
        <shortName evidence="1">UMPK</shortName>
    </alternativeName>
</protein>
<reference key="1">
    <citation type="journal article" date="2006" name="Genome Res.">
        <title>Massive genome erosion and functional adaptations provide insights into the symbiotic lifestyle of Sodalis glossinidius in the tsetse host.</title>
        <authorList>
            <person name="Toh H."/>
            <person name="Weiss B.L."/>
            <person name="Perkin S.A.H."/>
            <person name="Yamashita A."/>
            <person name="Oshima K."/>
            <person name="Hattori M."/>
            <person name="Aksoy S."/>
        </authorList>
    </citation>
    <scope>NUCLEOTIDE SEQUENCE [LARGE SCALE GENOMIC DNA]</scope>
    <source>
        <strain>morsitans</strain>
    </source>
</reference>
<keyword id="KW-0021">Allosteric enzyme</keyword>
<keyword id="KW-0067">ATP-binding</keyword>
<keyword id="KW-0963">Cytoplasm</keyword>
<keyword id="KW-0418">Kinase</keyword>
<keyword id="KW-0547">Nucleotide-binding</keyword>
<keyword id="KW-0665">Pyrimidine biosynthesis</keyword>
<keyword id="KW-0808">Transferase</keyword>
<organism>
    <name type="scientific">Sodalis glossinidius (strain morsitans)</name>
    <dbReference type="NCBI Taxonomy" id="343509"/>
    <lineage>
        <taxon>Bacteria</taxon>
        <taxon>Pseudomonadati</taxon>
        <taxon>Pseudomonadota</taxon>
        <taxon>Gammaproteobacteria</taxon>
        <taxon>Enterobacterales</taxon>
        <taxon>Bruguierivoracaceae</taxon>
        <taxon>Sodalis</taxon>
    </lineage>
</organism>
<evidence type="ECO:0000255" key="1">
    <source>
        <dbReference type="HAMAP-Rule" id="MF_01220"/>
    </source>
</evidence>
<accession>Q2NRK9</accession>
<name>PYRH_SODGM</name>
<feature type="chain" id="PRO_1000054021" description="Uridylate kinase">
    <location>
        <begin position="1"/>
        <end position="241"/>
    </location>
</feature>
<feature type="region of interest" description="Involved in allosteric activation by GTP" evidence="1">
    <location>
        <begin position="23"/>
        <end position="28"/>
    </location>
</feature>
<feature type="binding site" evidence="1">
    <location>
        <begin position="15"/>
        <end position="18"/>
    </location>
    <ligand>
        <name>ATP</name>
        <dbReference type="ChEBI" id="CHEBI:30616"/>
    </ligand>
</feature>
<feature type="binding site" evidence="1">
    <location>
        <position position="57"/>
    </location>
    <ligand>
        <name>UMP</name>
        <dbReference type="ChEBI" id="CHEBI:57865"/>
    </ligand>
</feature>
<feature type="binding site" evidence="1">
    <location>
        <position position="58"/>
    </location>
    <ligand>
        <name>ATP</name>
        <dbReference type="ChEBI" id="CHEBI:30616"/>
    </ligand>
</feature>
<feature type="binding site" evidence="1">
    <location>
        <position position="62"/>
    </location>
    <ligand>
        <name>ATP</name>
        <dbReference type="ChEBI" id="CHEBI:30616"/>
    </ligand>
</feature>
<feature type="binding site" evidence="1">
    <location>
        <position position="77"/>
    </location>
    <ligand>
        <name>UMP</name>
        <dbReference type="ChEBI" id="CHEBI:57865"/>
    </ligand>
</feature>
<feature type="binding site" evidence="1">
    <location>
        <begin position="138"/>
        <end position="145"/>
    </location>
    <ligand>
        <name>UMP</name>
        <dbReference type="ChEBI" id="CHEBI:57865"/>
    </ligand>
</feature>
<feature type="binding site" evidence="1">
    <location>
        <position position="165"/>
    </location>
    <ligand>
        <name>ATP</name>
        <dbReference type="ChEBI" id="CHEBI:30616"/>
    </ligand>
</feature>
<feature type="binding site" evidence="1">
    <location>
        <position position="171"/>
    </location>
    <ligand>
        <name>ATP</name>
        <dbReference type="ChEBI" id="CHEBI:30616"/>
    </ligand>
</feature>
<feature type="binding site" evidence="1">
    <location>
        <position position="174"/>
    </location>
    <ligand>
        <name>ATP</name>
        <dbReference type="ChEBI" id="CHEBI:30616"/>
    </ligand>
</feature>
<comment type="function">
    <text evidence="1">Catalyzes the reversible phosphorylation of UMP to UDP.</text>
</comment>
<comment type="catalytic activity">
    <reaction evidence="1">
        <text>UMP + ATP = UDP + ADP</text>
        <dbReference type="Rhea" id="RHEA:24400"/>
        <dbReference type="ChEBI" id="CHEBI:30616"/>
        <dbReference type="ChEBI" id="CHEBI:57865"/>
        <dbReference type="ChEBI" id="CHEBI:58223"/>
        <dbReference type="ChEBI" id="CHEBI:456216"/>
        <dbReference type="EC" id="2.7.4.22"/>
    </reaction>
</comment>
<comment type="activity regulation">
    <text evidence="1">Allosterically activated by GTP. Inhibited by UTP.</text>
</comment>
<comment type="pathway">
    <text evidence="1">Pyrimidine metabolism; CTP biosynthesis via de novo pathway; UDP from UMP (UMPK route): step 1/1.</text>
</comment>
<comment type="subunit">
    <text evidence="1">Homohexamer.</text>
</comment>
<comment type="subcellular location">
    <subcellularLocation>
        <location evidence="1">Cytoplasm</location>
    </subcellularLocation>
</comment>
<comment type="similarity">
    <text evidence="1">Belongs to the UMP kinase family.</text>
</comment>
<proteinExistence type="inferred from homology"/>
<sequence>MATNAKPIYQRILLKLSGEALQGAEGFGIDASVLDRMAQEVKELVELGIQVGVVIGGGNLFRGTGLAKAGMNRVVGDHMGMLATVMNGLAMRDALHRAYVNARLMSAIPLNGVCDNYSWAEAISLLRNNRVVIFAAGTGNPFFTTDSAACLRGIEIEAEAVLKATKVDGIFSADPVKHPDATLYDQLSYQDVLEKELKVMDLAAFTLARDHNLPIRVFNMNKPGALRRVVMGDKEGTLITK</sequence>
<gene>
    <name evidence="1" type="primary">pyrH</name>
    <name type="ordered locus">SG1941</name>
</gene>